<comment type="function">
    <text evidence="1">Initiates the rapid degradation of small, acid-soluble proteins during spore germination.</text>
</comment>
<comment type="catalytic activity">
    <reaction evidence="1">
        <text>Endopeptidase action with P4 Glu or Asp, P1 preferably Glu &gt; Asp, P1' hydrophobic and P2' Ala.</text>
        <dbReference type="EC" id="3.4.24.78"/>
    </reaction>
</comment>
<comment type="subunit">
    <text evidence="1">Homotetramer.</text>
</comment>
<comment type="PTM">
    <text evidence="1">Autoproteolytically processed. The inactive tetrameric zymogen termed p46 autoprocesses to a smaller form termed p41, which is active only during spore germination.</text>
</comment>
<comment type="similarity">
    <text evidence="1">Belongs to the peptidase A25 family.</text>
</comment>
<protein>
    <recommendedName>
        <fullName evidence="1">Germination protease</fullName>
        <ecNumber evidence="1">3.4.24.78</ecNumber>
    </recommendedName>
    <alternativeName>
        <fullName evidence="1">GPR endopeptidase</fullName>
    </alternativeName>
    <alternativeName>
        <fullName evidence="1">Germination proteinase</fullName>
    </alternativeName>
    <alternativeName>
        <fullName evidence="1">Spore protease</fullName>
    </alternativeName>
</protein>
<gene>
    <name evidence="1" type="primary">gpr</name>
    <name type="ordered locus">GWCH70_2444</name>
</gene>
<proteinExistence type="inferred from homology"/>
<name>GPR_GEOSW</name>
<organism>
    <name type="scientific">Geobacillus sp. (strain WCH70)</name>
    <dbReference type="NCBI Taxonomy" id="471223"/>
    <lineage>
        <taxon>Bacteria</taxon>
        <taxon>Bacillati</taxon>
        <taxon>Bacillota</taxon>
        <taxon>Bacilli</taxon>
        <taxon>Bacillales</taxon>
        <taxon>Anoxybacillaceae</taxon>
        <taxon>Geobacillus</taxon>
    </lineage>
</organism>
<feature type="propeptide" id="PRO_1000212308" evidence="1">
    <location>
        <begin position="1"/>
        <end position="15"/>
    </location>
</feature>
<feature type="chain" id="PRO_1000212309" description="Germination protease">
    <location>
        <begin position="16"/>
        <end position="372"/>
    </location>
</feature>
<accession>C5D4U8</accession>
<sequence length="372" mass="40941">MNRSIDLSMYSVRTDLAIEAHEIAVEERLQQKRESASPIEGVIIHDREIDGIKLSHVEVTEEGAKSIGKKPGNYLTIEAQGIREHNTELQQKVQDIFAKEFNAFLRKLDIRKESSCLVVGLGNSNVTPDALGPLTVENLLITRHLFHLQPESVEEGFRPVSAIAPGVMGTTGIETSDIIHGIVEKTKPDFVIVIDALAARSIERVNATIQISDTGIHPGSGVGNKRKELSKETLGIPVISIGVPTVVDAVSITSDTIDFILKHFGREMREGKRPSSALAPAGWTFGKKKRLTEEDMPSTEQRSTFLGIIGTLEEEEKRRLIYEVLSPLGHNLMVTPKEVDMFIEDMANLLASGLNAALHEQIDQDNTGSYTH</sequence>
<reference key="1">
    <citation type="submission" date="2009-06" db="EMBL/GenBank/DDBJ databases">
        <title>Complete sequence of chromosome of Geopacillus sp. WCH70.</title>
        <authorList>
            <consortium name="US DOE Joint Genome Institute"/>
            <person name="Lucas S."/>
            <person name="Copeland A."/>
            <person name="Lapidus A."/>
            <person name="Glavina del Rio T."/>
            <person name="Dalin E."/>
            <person name="Tice H."/>
            <person name="Bruce D."/>
            <person name="Goodwin L."/>
            <person name="Pitluck S."/>
            <person name="Chertkov O."/>
            <person name="Brettin T."/>
            <person name="Detter J.C."/>
            <person name="Han C."/>
            <person name="Larimer F."/>
            <person name="Land M."/>
            <person name="Hauser L."/>
            <person name="Kyrpides N."/>
            <person name="Mikhailova N."/>
            <person name="Brumm P."/>
            <person name="Mead D.A."/>
            <person name="Richardson P."/>
        </authorList>
    </citation>
    <scope>NUCLEOTIDE SEQUENCE [LARGE SCALE GENOMIC DNA]</scope>
    <source>
        <strain>WCH70</strain>
    </source>
</reference>
<keyword id="KW-0378">Hydrolase</keyword>
<keyword id="KW-0645">Protease</keyword>
<keyword id="KW-0865">Zymogen</keyword>
<dbReference type="EC" id="3.4.24.78" evidence="1"/>
<dbReference type="EMBL" id="CP001638">
    <property type="protein sequence ID" value="ACS25140.1"/>
    <property type="molecule type" value="Genomic_DNA"/>
</dbReference>
<dbReference type="SMR" id="C5D4U8"/>
<dbReference type="STRING" id="471223.GWCH70_2444"/>
<dbReference type="MEROPS" id="A25.001"/>
<dbReference type="KEGG" id="gwc:GWCH70_2444"/>
<dbReference type="eggNOG" id="COG0680">
    <property type="taxonomic scope" value="Bacteria"/>
</dbReference>
<dbReference type="HOGENOM" id="CLU_055087_1_0_9"/>
<dbReference type="OrthoDB" id="9777293at2"/>
<dbReference type="GO" id="GO:0004222">
    <property type="term" value="F:metalloendopeptidase activity"/>
    <property type="evidence" value="ECO:0007669"/>
    <property type="project" value="UniProtKB-UniRule"/>
</dbReference>
<dbReference type="GO" id="GO:0006508">
    <property type="term" value="P:proteolysis"/>
    <property type="evidence" value="ECO:0007669"/>
    <property type="project" value="UniProtKB-UniRule"/>
</dbReference>
<dbReference type="GO" id="GO:0009847">
    <property type="term" value="P:spore germination"/>
    <property type="evidence" value="ECO:0007669"/>
    <property type="project" value="UniProtKB-UniRule"/>
</dbReference>
<dbReference type="Gene3D" id="3.40.50.1450">
    <property type="entry name" value="HybD-like"/>
    <property type="match status" value="1"/>
</dbReference>
<dbReference type="HAMAP" id="MF_00626">
    <property type="entry name" value="Germination_prot"/>
    <property type="match status" value="1"/>
</dbReference>
<dbReference type="InterPro" id="IPR023430">
    <property type="entry name" value="Pept_HybD-like_dom_sf"/>
</dbReference>
<dbReference type="InterPro" id="IPR005080">
    <property type="entry name" value="Peptidase_A25"/>
</dbReference>
<dbReference type="NCBIfam" id="TIGR01441">
    <property type="entry name" value="GPR"/>
    <property type="match status" value="1"/>
</dbReference>
<dbReference type="Pfam" id="PF03418">
    <property type="entry name" value="Peptidase_A25"/>
    <property type="match status" value="1"/>
</dbReference>
<dbReference type="PIRSF" id="PIRSF019549">
    <property type="entry name" value="Peptidase_A25"/>
    <property type="match status" value="1"/>
</dbReference>
<dbReference type="SUPFAM" id="SSF53163">
    <property type="entry name" value="HybD-like"/>
    <property type="match status" value="1"/>
</dbReference>
<evidence type="ECO:0000255" key="1">
    <source>
        <dbReference type="HAMAP-Rule" id="MF_00626"/>
    </source>
</evidence>